<sequence length="314" mass="35868">MSFASEMKNELTRIDVDEMNAKAELSALIRMNGALSLSNQQFVINVQTENATTARRIYSLIKRVFNVEVEILVRKKMKLKKNNIYICRTKMKAKEILDELGILKDGIFTHEIDHSMIQDDEMRRSYLRGAFLAGGSVNNPETSSYHLEIFSQNESHAEGLTKLMNSYELNAKHLERKKGSITYLKEAEKISDFLSLIGGYQALLKFEDVRIVRDMRNSVNRLVNCETANLNKTVSAAMKQVESIKLIDKEIGIENLPDRLREIARIRVEHQEISLKELGEMVSTGPISKSGVNHRLRKLNDLADKIRNGEQIEL</sequence>
<name>WHIA_STAA1</name>
<organism>
    <name type="scientific">Staphylococcus aureus (strain Mu3 / ATCC 700698)</name>
    <dbReference type="NCBI Taxonomy" id="418127"/>
    <lineage>
        <taxon>Bacteria</taxon>
        <taxon>Bacillati</taxon>
        <taxon>Bacillota</taxon>
        <taxon>Bacilli</taxon>
        <taxon>Bacillales</taxon>
        <taxon>Staphylococcaceae</taxon>
        <taxon>Staphylococcus</taxon>
    </lineage>
</organism>
<dbReference type="EMBL" id="AP009324">
    <property type="protein sequence ID" value="BAF77647.1"/>
    <property type="molecule type" value="Genomic_DNA"/>
</dbReference>
<dbReference type="RefSeq" id="WP_000006551.1">
    <property type="nucleotide sequence ID" value="NZ_CTYB01000039.1"/>
</dbReference>
<dbReference type="SMR" id="A7WZR7"/>
<dbReference type="KEGG" id="saw:SAHV_0764"/>
<dbReference type="HOGENOM" id="CLU_053282_0_0_9"/>
<dbReference type="GO" id="GO:0003677">
    <property type="term" value="F:DNA binding"/>
    <property type="evidence" value="ECO:0007669"/>
    <property type="project" value="UniProtKB-UniRule"/>
</dbReference>
<dbReference type="GO" id="GO:0051301">
    <property type="term" value="P:cell division"/>
    <property type="evidence" value="ECO:0007669"/>
    <property type="project" value="UniProtKB-UniRule"/>
</dbReference>
<dbReference type="GO" id="GO:0043937">
    <property type="term" value="P:regulation of sporulation"/>
    <property type="evidence" value="ECO:0007669"/>
    <property type="project" value="InterPro"/>
</dbReference>
<dbReference type="FunFam" id="3.10.28.10:FF:000002">
    <property type="entry name" value="Probable cell division protein WhiA"/>
    <property type="match status" value="1"/>
</dbReference>
<dbReference type="Gene3D" id="3.10.28.10">
    <property type="entry name" value="Homing endonucleases"/>
    <property type="match status" value="1"/>
</dbReference>
<dbReference type="HAMAP" id="MF_01420">
    <property type="entry name" value="HTH_type_WhiA"/>
    <property type="match status" value="1"/>
</dbReference>
<dbReference type="InterPro" id="IPR027434">
    <property type="entry name" value="Homing_endonucl"/>
</dbReference>
<dbReference type="InterPro" id="IPR018478">
    <property type="entry name" value="Sporu_reg_WhiA_N_dom"/>
</dbReference>
<dbReference type="InterPro" id="IPR003802">
    <property type="entry name" value="Sporulation_regulator_WhiA"/>
</dbReference>
<dbReference type="InterPro" id="IPR023054">
    <property type="entry name" value="Sporulation_regulator_WhiA_C"/>
</dbReference>
<dbReference type="InterPro" id="IPR039518">
    <property type="entry name" value="WhiA_LAGLIDADG_dom"/>
</dbReference>
<dbReference type="NCBIfam" id="TIGR00647">
    <property type="entry name" value="DNA_bind_WhiA"/>
    <property type="match status" value="1"/>
</dbReference>
<dbReference type="PANTHER" id="PTHR37307">
    <property type="entry name" value="CELL DIVISION PROTEIN WHIA-RELATED"/>
    <property type="match status" value="1"/>
</dbReference>
<dbReference type="PANTHER" id="PTHR37307:SF1">
    <property type="entry name" value="CELL DIVISION PROTEIN WHIA-RELATED"/>
    <property type="match status" value="1"/>
</dbReference>
<dbReference type="Pfam" id="PF02650">
    <property type="entry name" value="HTH_WhiA"/>
    <property type="match status" value="1"/>
</dbReference>
<dbReference type="Pfam" id="PF14527">
    <property type="entry name" value="LAGLIDADG_WhiA"/>
    <property type="match status" value="1"/>
</dbReference>
<dbReference type="Pfam" id="PF10298">
    <property type="entry name" value="WhiA_N"/>
    <property type="match status" value="1"/>
</dbReference>
<dbReference type="SUPFAM" id="SSF55608">
    <property type="entry name" value="Homing endonucleases"/>
    <property type="match status" value="1"/>
</dbReference>
<accession>A7WZR7</accession>
<gene>
    <name evidence="1" type="primary">whiA</name>
    <name type="ordered locus">SAHV_0764</name>
</gene>
<keyword id="KW-0131">Cell cycle</keyword>
<keyword id="KW-0132">Cell division</keyword>
<keyword id="KW-0238">DNA-binding</keyword>
<evidence type="ECO:0000255" key="1">
    <source>
        <dbReference type="HAMAP-Rule" id="MF_01420"/>
    </source>
</evidence>
<feature type="chain" id="PRO_0000376557" description="Probable cell division protein WhiA">
    <location>
        <begin position="1"/>
        <end position="314"/>
    </location>
</feature>
<feature type="DNA-binding region" description="H-T-H motif" evidence="1">
    <location>
        <begin position="274"/>
        <end position="308"/>
    </location>
</feature>
<protein>
    <recommendedName>
        <fullName evidence="1">Probable cell division protein WhiA</fullName>
    </recommendedName>
</protein>
<comment type="function">
    <text evidence="1">Involved in cell division and chromosome segregation.</text>
</comment>
<comment type="similarity">
    <text evidence="1">Belongs to the WhiA family.</text>
</comment>
<proteinExistence type="inferred from homology"/>
<reference key="1">
    <citation type="journal article" date="2008" name="Antimicrob. Agents Chemother.">
        <title>Mutated response regulator graR is responsible for phenotypic conversion of Staphylococcus aureus from heterogeneous vancomycin-intermediate resistance to vancomycin-intermediate resistance.</title>
        <authorList>
            <person name="Neoh H.-M."/>
            <person name="Cui L."/>
            <person name="Yuzawa H."/>
            <person name="Takeuchi F."/>
            <person name="Matsuo M."/>
            <person name="Hiramatsu K."/>
        </authorList>
    </citation>
    <scope>NUCLEOTIDE SEQUENCE [LARGE SCALE GENOMIC DNA]</scope>
    <source>
        <strain>Mu3 / ATCC 700698</strain>
    </source>
</reference>